<evidence type="ECO:0000255" key="1">
    <source>
        <dbReference type="HAMAP-Rule" id="MF_01692"/>
    </source>
</evidence>
<comment type="function">
    <text evidence="1">Catalyzes the conversion of N-acetyl-diaminopimelate to diaminopimelate and acetate.</text>
</comment>
<comment type="catalytic activity">
    <reaction evidence="1">
        <text>N-acetyl-(2S,6S)-2,6-diaminopimelate + H2O = (2S,6S)-2,6-diaminopimelate + acetate</text>
        <dbReference type="Rhea" id="RHEA:20405"/>
        <dbReference type="ChEBI" id="CHEBI:15377"/>
        <dbReference type="ChEBI" id="CHEBI:30089"/>
        <dbReference type="ChEBI" id="CHEBI:57609"/>
        <dbReference type="ChEBI" id="CHEBI:58767"/>
        <dbReference type="EC" id="3.5.1.47"/>
    </reaction>
</comment>
<comment type="pathway">
    <text evidence="1">Amino-acid biosynthesis; L-lysine biosynthesis via DAP pathway; LL-2,6-diaminopimelate from (S)-tetrahydrodipicolinate (acetylase route): step 3/3.</text>
</comment>
<comment type="similarity">
    <text evidence="1">Belongs to the peptidase M20A family. N-acetyldiaminopimelate deacetylase subfamily.</text>
</comment>
<reference key="1">
    <citation type="submission" date="2008-10" db="EMBL/GenBank/DDBJ databases">
        <title>Genome sequence of Bacillus cereus B4264.</title>
        <authorList>
            <person name="Dodson R.J."/>
            <person name="Durkin A.S."/>
            <person name="Rosovitz M.J."/>
            <person name="Rasko D.A."/>
            <person name="Hoffmaster A."/>
            <person name="Ravel J."/>
            <person name="Sutton G."/>
        </authorList>
    </citation>
    <scope>NUCLEOTIDE SEQUENCE [LARGE SCALE GENOMIC DNA]</scope>
    <source>
        <strain>B4264</strain>
    </source>
</reference>
<sequence>MTVSKFVQIRRDLHRIPEIGFKEWKTQQYILDYIGTLSHEFVEVKTWKTGVIVKVNGKNPEKIIGYRADIDGLPITEETGYEFASIHEGMMHACGHDVHTTIGLGLLTKAVSERIDDDLVFLFQPAEEGPGGALPMLESEELKEWKPNIILGLHIAPEYAVGTIATKEGLLFANTSELYIDLKGKGGHAAYPHTANDMIVAASHLVTQLQSVISRNVNPLDSAVITIGKITGGTVQNIIAEKSRLEGTIRTLSVESMKRVKSRIESIVAGIEASFQCEAIIDYGAMYHQVYNHEELTREFMEFVHKQTDMNVITCTEAMTGEDFGYMLREIPGFMFWLGVNSEYGLHHAKLKPDEEVIEKAITFLSQYVKWKGNRK</sequence>
<accession>B7H6W7</accession>
<name>DAPEL_BACC4</name>
<proteinExistence type="inferred from homology"/>
<dbReference type="EC" id="3.5.1.47" evidence="1"/>
<dbReference type="EMBL" id="CP001176">
    <property type="protein sequence ID" value="ACK61460.1"/>
    <property type="molecule type" value="Genomic_DNA"/>
</dbReference>
<dbReference type="RefSeq" id="WP_000218672.1">
    <property type="nucleotide sequence ID" value="NZ_VEHB01000002.1"/>
</dbReference>
<dbReference type="SMR" id="B7H6W7"/>
<dbReference type="MEROPS" id="M20.A27"/>
<dbReference type="KEGG" id="bcb:BCB4264_A4083"/>
<dbReference type="HOGENOM" id="CLU_023257_0_1_9"/>
<dbReference type="UniPathway" id="UPA00034">
    <property type="reaction ID" value="UER00024"/>
</dbReference>
<dbReference type="Proteomes" id="UP000007096">
    <property type="component" value="Chromosome"/>
</dbReference>
<dbReference type="GO" id="GO:0050118">
    <property type="term" value="F:N-acetyldiaminopimelate deacetylase activity"/>
    <property type="evidence" value="ECO:0007669"/>
    <property type="project" value="UniProtKB-UniRule"/>
</dbReference>
<dbReference type="GO" id="GO:0019877">
    <property type="term" value="P:diaminopimelate biosynthetic process"/>
    <property type="evidence" value="ECO:0007669"/>
    <property type="project" value="UniProtKB-UniRule"/>
</dbReference>
<dbReference type="GO" id="GO:0009089">
    <property type="term" value="P:lysine biosynthetic process via diaminopimelate"/>
    <property type="evidence" value="ECO:0007669"/>
    <property type="project" value="UniProtKB-UniRule"/>
</dbReference>
<dbReference type="CDD" id="cd05670">
    <property type="entry name" value="M20_Acy1_YkuR-like"/>
    <property type="match status" value="1"/>
</dbReference>
<dbReference type="FunFam" id="3.30.70.360:FF:000001">
    <property type="entry name" value="N-acetyldiaminopimelate deacetylase"/>
    <property type="match status" value="1"/>
</dbReference>
<dbReference type="Gene3D" id="3.30.70.360">
    <property type="match status" value="1"/>
</dbReference>
<dbReference type="Gene3D" id="3.40.630.10">
    <property type="entry name" value="Zn peptidases"/>
    <property type="match status" value="1"/>
</dbReference>
<dbReference type="HAMAP" id="MF_01692">
    <property type="entry name" value="DapEL"/>
    <property type="match status" value="1"/>
</dbReference>
<dbReference type="InterPro" id="IPR023905">
    <property type="entry name" value="AcetylDAP_deacetylase"/>
</dbReference>
<dbReference type="InterPro" id="IPR017439">
    <property type="entry name" value="Amidohydrolase"/>
</dbReference>
<dbReference type="InterPro" id="IPR036264">
    <property type="entry name" value="Bact_exopeptidase_dim_dom"/>
</dbReference>
<dbReference type="InterPro" id="IPR002933">
    <property type="entry name" value="Peptidase_M20"/>
</dbReference>
<dbReference type="InterPro" id="IPR011650">
    <property type="entry name" value="Peptidase_M20_dimer"/>
</dbReference>
<dbReference type="NCBIfam" id="TIGR01891">
    <property type="entry name" value="amidohydrolases"/>
    <property type="match status" value="1"/>
</dbReference>
<dbReference type="PANTHER" id="PTHR11014:SF98">
    <property type="entry name" value="N-ACETYLDIAMINOPIMELATE DEACETYLASE"/>
    <property type="match status" value="1"/>
</dbReference>
<dbReference type="PANTHER" id="PTHR11014">
    <property type="entry name" value="PEPTIDASE M20 FAMILY MEMBER"/>
    <property type="match status" value="1"/>
</dbReference>
<dbReference type="Pfam" id="PF07687">
    <property type="entry name" value="M20_dimer"/>
    <property type="match status" value="1"/>
</dbReference>
<dbReference type="Pfam" id="PF01546">
    <property type="entry name" value="Peptidase_M20"/>
    <property type="match status" value="1"/>
</dbReference>
<dbReference type="PIRSF" id="PIRSF005962">
    <property type="entry name" value="Pept_M20D_amidohydro"/>
    <property type="match status" value="1"/>
</dbReference>
<dbReference type="SUPFAM" id="SSF55031">
    <property type="entry name" value="Bacterial exopeptidase dimerisation domain"/>
    <property type="match status" value="1"/>
</dbReference>
<dbReference type="SUPFAM" id="SSF53187">
    <property type="entry name" value="Zn-dependent exopeptidases"/>
    <property type="match status" value="1"/>
</dbReference>
<gene>
    <name type="ordered locus">BCB4264_A4083</name>
</gene>
<feature type="chain" id="PRO_0000376741" description="N-acetyldiaminopimelate deacetylase">
    <location>
        <begin position="1"/>
        <end position="376"/>
    </location>
</feature>
<feature type="active site" evidence="1">
    <location>
        <position position="69"/>
    </location>
</feature>
<feature type="active site" description="Proton acceptor" evidence="1">
    <location>
        <position position="128"/>
    </location>
</feature>
<protein>
    <recommendedName>
        <fullName evidence="1">N-acetyldiaminopimelate deacetylase</fullName>
        <ecNumber evidence="1">3.5.1.47</ecNumber>
    </recommendedName>
</protein>
<keyword id="KW-0028">Amino-acid biosynthesis</keyword>
<keyword id="KW-0220">Diaminopimelate biosynthesis</keyword>
<keyword id="KW-0378">Hydrolase</keyword>
<keyword id="KW-0457">Lysine biosynthesis</keyword>
<organism>
    <name type="scientific">Bacillus cereus (strain B4264)</name>
    <dbReference type="NCBI Taxonomy" id="405532"/>
    <lineage>
        <taxon>Bacteria</taxon>
        <taxon>Bacillati</taxon>
        <taxon>Bacillota</taxon>
        <taxon>Bacilli</taxon>
        <taxon>Bacillales</taxon>
        <taxon>Bacillaceae</taxon>
        <taxon>Bacillus</taxon>
        <taxon>Bacillus cereus group</taxon>
    </lineage>
</organism>